<name>RHO_MYCTO</name>
<evidence type="ECO:0000255" key="1">
    <source>
        <dbReference type="HAMAP-Rule" id="MF_01884"/>
    </source>
</evidence>
<evidence type="ECO:0000255" key="2">
    <source>
        <dbReference type="PROSITE-ProRule" id="PRU01203"/>
    </source>
</evidence>
<evidence type="ECO:0000256" key="3">
    <source>
        <dbReference type="SAM" id="MobiDB-lite"/>
    </source>
</evidence>
<proteinExistence type="inferred from homology"/>
<organism>
    <name type="scientific">Mycobacterium tuberculosis (strain CDC 1551 / Oshkosh)</name>
    <dbReference type="NCBI Taxonomy" id="83331"/>
    <lineage>
        <taxon>Bacteria</taxon>
        <taxon>Bacillati</taxon>
        <taxon>Actinomycetota</taxon>
        <taxon>Actinomycetes</taxon>
        <taxon>Mycobacteriales</taxon>
        <taxon>Mycobacteriaceae</taxon>
        <taxon>Mycobacterium</taxon>
        <taxon>Mycobacterium tuberculosis complex</taxon>
    </lineage>
</organism>
<comment type="function">
    <text evidence="1">Facilitates transcription termination by a mechanism that involves Rho binding to the nascent RNA, activation of Rho's RNA-dependent ATPase activity, and release of the mRNA from the DNA template.</text>
</comment>
<comment type="subunit">
    <text evidence="1">Homohexamer. The homohexamer assembles into an open ring structure.</text>
</comment>
<comment type="similarity">
    <text evidence="1">Belongs to the Rho family.</text>
</comment>
<accession>P9WHF2</accession>
<accession>L0T8Z1</accession>
<accession>P66028</accession>
<accession>Q10607</accession>
<gene>
    <name evidence="1" type="primary">rho</name>
    <name type="ordered locus">MT1336</name>
</gene>
<feature type="chain" id="PRO_0000428197" description="Transcription termination factor Rho">
    <location>
        <begin position="1"/>
        <end position="602"/>
    </location>
</feature>
<feature type="domain" description="Rho RNA-BD" evidence="2">
    <location>
        <begin position="223"/>
        <end position="301"/>
    </location>
</feature>
<feature type="region of interest" description="Disordered" evidence="3">
    <location>
        <begin position="1"/>
        <end position="35"/>
    </location>
</feature>
<feature type="region of interest" description="Disordered" evidence="3">
    <location>
        <begin position="76"/>
        <end position="216"/>
    </location>
</feature>
<feature type="compositionally biased region" description="Basic and acidic residues" evidence="3">
    <location>
        <begin position="85"/>
        <end position="96"/>
    </location>
</feature>
<feature type="compositionally biased region" description="Polar residues" evidence="3">
    <location>
        <begin position="100"/>
        <end position="120"/>
    </location>
</feature>
<feature type="compositionally biased region" description="Low complexity" evidence="3">
    <location>
        <begin position="172"/>
        <end position="182"/>
    </location>
</feature>
<feature type="compositionally biased region" description="Basic and acidic residues" evidence="3">
    <location>
        <begin position="183"/>
        <end position="192"/>
    </location>
</feature>
<feature type="compositionally biased region" description="Basic residues" evidence="3">
    <location>
        <begin position="193"/>
        <end position="206"/>
    </location>
</feature>
<feature type="binding site" evidence="1">
    <location>
        <begin position="344"/>
        <end position="349"/>
    </location>
    <ligand>
        <name>ATP</name>
        <dbReference type="ChEBI" id="CHEBI:30616"/>
    </ligand>
</feature>
<feature type="binding site" evidence="1">
    <location>
        <begin position="356"/>
        <end position="361"/>
    </location>
    <ligand>
        <name>ATP</name>
        <dbReference type="ChEBI" id="CHEBI:30616"/>
    </ligand>
</feature>
<feature type="binding site" evidence="1">
    <location>
        <position position="387"/>
    </location>
    <ligand>
        <name>ATP</name>
        <dbReference type="ChEBI" id="CHEBI:30616"/>
    </ligand>
</feature>
<dbReference type="EC" id="3.6.4.-" evidence="1"/>
<dbReference type="EMBL" id="AE000516">
    <property type="protein sequence ID" value="AAK45598.1"/>
    <property type="molecule type" value="Genomic_DNA"/>
</dbReference>
<dbReference type="PIR" id="E70773">
    <property type="entry name" value="E70773"/>
</dbReference>
<dbReference type="RefSeq" id="WP_003898814.1">
    <property type="nucleotide sequence ID" value="NZ_KK341227.1"/>
</dbReference>
<dbReference type="SMR" id="P9WHF2"/>
<dbReference type="GeneID" id="45425271"/>
<dbReference type="KEGG" id="mtc:MT1336"/>
<dbReference type="PATRIC" id="fig|83331.31.peg.1442"/>
<dbReference type="HOGENOM" id="CLU_016377_3_2_11"/>
<dbReference type="Proteomes" id="UP000001020">
    <property type="component" value="Chromosome"/>
</dbReference>
<dbReference type="GO" id="GO:0005524">
    <property type="term" value="F:ATP binding"/>
    <property type="evidence" value="ECO:0007669"/>
    <property type="project" value="UniProtKB-UniRule"/>
</dbReference>
<dbReference type="GO" id="GO:0016887">
    <property type="term" value="F:ATP hydrolysis activity"/>
    <property type="evidence" value="ECO:0007669"/>
    <property type="project" value="InterPro"/>
</dbReference>
<dbReference type="GO" id="GO:0008186">
    <property type="term" value="F:ATP-dependent activity, acting on RNA"/>
    <property type="evidence" value="ECO:0007669"/>
    <property type="project" value="InterPro"/>
</dbReference>
<dbReference type="GO" id="GO:0004386">
    <property type="term" value="F:helicase activity"/>
    <property type="evidence" value="ECO:0007669"/>
    <property type="project" value="UniProtKB-UniRule"/>
</dbReference>
<dbReference type="GO" id="GO:0003723">
    <property type="term" value="F:RNA binding"/>
    <property type="evidence" value="ECO:0007669"/>
    <property type="project" value="UniProtKB-UniRule"/>
</dbReference>
<dbReference type="GO" id="GO:0006353">
    <property type="term" value="P:DNA-templated transcription termination"/>
    <property type="evidence" value="ECO:0007669"/>
    <property type="project" value="UniProtKB-UniRule"/>
</dbReference>
<dbReference type="CDD" id="cd01128">
    <property type="entry name" value="rho_factor_C"/>
    <property type="match status" value="1"/>
</dbReference>
<dbReference type="FunFam" id="2.40.50.140:FF:000316">
    <property type="entry name" value="Transcription termination factor Rho"/>
    <property type="match status" value="1"/>
</dbReference>
<dbReference type="FunFam" id="3.40.50.300:FF:000072">
    <property type="entry name" value="Transcription termination factor Rho"/>
    <property type="match status" value="1"/>
</dbReference>
<dbReference type="Gene3D" id="2.40.50.140">
    <property type="entry name" value="Nucleic acid-binding proteins"/>
    <property type="match status" value="1"/>
</dbReference>
<dbReference type="Gene3D" id="3.40.50.300">
    <property type="entry name" value="P-loop containing nucleotide triphosphate hydrolases"/>
    <property type="match status" value="1"/>
</dbReference>
<dbReference type="HAMAP" id="MF_01884">
    <property type="entry name" value="Rho"/>
    <property type="match status" value="1"/>
</dbReference>
<dbReference type="InterPro" id="IPR003593">
    <property type="entry name" value="AAA+_ATPase"/>
</dbReference>
<dbReference type="InterPro" id="IPR000194">
    <property type="entry name" value="ATPase_F1/V1/A1_a/bsu_nucl-bd"/>
</dbReference>
<dbReference type="InterPro" id="IPR011129">
    <property type="entry name" value="CSD"/>
</dbReference>
<dbReference type="InterPro" id="IPR012340">
    <property type="entry name" value="NA-bd_OB-fold"/>
</dbReference>
<dbReference type="InterPro" id="IPR027417">
    <property type="entry name" value="P-loop_NTPase"/>
</dbReference>
<dbReference type="InterPro" id="IPR011112">
    <property type="entry name" value="Rho-like_N"/>
</dbReference>
<dbReference type="InterPro" id="IPR041703">
    <property type="entry name" value="Rho_factor_ATP-bd"/>
</dbReference>
<dbReference type="InterPro" id="IPR036269">
    <property type="entry name" value="Rho_N_sf"/>
</dbReference>
<dbReference type="InterPro" id="IPR011113">
    <property type="entry name" value="Rho_RNA-bd"/>
</dbReference>
<dbReference type="InterPro" id="IPR004665">
    <property type="entry name" value="Term_rho"/>
</dbReference>
<dbReference type="NCBIfam" id="NF006886">
    <property type="entry name" value="PRK09376.1"/>
    <property type="match status" value="1"/>
</dbReference>
<dbReference type="NCBIfam" id="TIGR00767">
    <property type="entry name" value="rho"/>
    <property type="match status" value="1"/>
</dbReference>
<dbReference type="PANTHER" id="PTHR46425">
    <property type="entry name" value="TRANSCRIPTION TERMINATION FACTOR RHO"/>
    <property type="match status" value="1"/>
</dbReference>
<dbReference type="PANTHER" id="PTHR46425:SF1">
    <property type="entry name" value="TRANSCRIPTION TERMINATION FACTOR RHO"/>
    <property type="match status" value="1"/>
</dbReference>
<dbReference type="Pfam" id="PF00006">
    <property type="entry name" value="ATP-synt_ab"/>
    <property type="match status" value="1"/>
</dbReference>
<dbReference type="Pfam" id="PF07498">
    <property type="entry name" value="Rho_N"/>
    <property type="match status" value="1"/>
</dbReference>
<dbReference type="Pfam" id="PF07497">
    <property type="entry name" value="Rho_RNA_bind"/>
    <property type="match status" value="1"/>
</dbReference>
<dbReference type="SMART" id="SM00382">
    <property type="entry name" value="AAA"/>
    <property type="match status" value="1"/>
</dbReference>
<dbReference type="SMART" id="SM00357">
    <property type="entry name" value="CSP"/>
    <property type="match status" value="1"/>
</dbReference>
<dbReference type="SMART" id="SM00959">
    <property type="entry name" value="Rho_N"/>
    <property type="match status" value="1"/>
</dbReference>
<dbReference type="SUPFAM" id="SSF50249">
    <property type="entry name" value="Nucleic acid-binding proteins"/>
    <property type="match status" value="1"/>
</dbReference>
<dbReference type="SUPFAM" id="SSF52540">
    <property type="entry name" value="P-loop containing nucleoside triphosphate hydrolases"/>
    <property type="match status" value="1"/>
</dbReference>
<dbReference type="SUPFAM" id="SSF68912">
    <property type="entry name" value="Rho N-terminal domain-like"/>
    <property type="match status" value="1"/>
</dbReference>
<dbReference type="PROSITE" id="PS51856">
    <property type="entry name" value="RHO_RNA_BD"/>
    <property type="match status" value="1"/>
</dbReference>
<reference key="1">
    <citation type="journal article" date="2002" name="J. Bacteriol.">
        <title>Whole-genome comparison of Mycobacterium tuberculosis clinical and laboratory strains.</title>
        <authorList>
            <person name="Fleischmann R.D."/>
            <person name="Alland D."/>
            <person name="Eisen J.A."/>
            <person name="Carpenter L."/>
            <person name="White O."/>
            <person name="Peterson J.D."/>
            <person name="DeBoy R.T."/>
            <person name="Dodson R.J."/>
            <person name="Gwinn M.L."/>
            <person name="Haft D.H."/>
            <person name="Hickey E.K."/>
            <person name="Kolonay J.F."/>
            <person name="Nelson W.C."/>
            <person name="Umayam L.A."/>
            <person name="Ermolaeva M.D."/>
            <person name="Salzberg S.L."/>
            <person name="Delcher A."/>
            <person name="Utterback T.R."/>
            <person name="Weidman J.F."/>
            <person name="Khouri H.M."/>
            <person name="Gill J."/>
            <person name="Mikula A."/>
            <person name="Bishai W."/>
            <person name="Jacobs W.R. Jr."/>
            <person name="Venter J.C."/>
            <person name="Fraser C.M."/>
        </authorList>
    </citation>
    <scope>NUCLEOTIDE SEQUENCE [LARGE SCALE GENOMIC DNA]</scope>
    <source>
        <strain>CDC 1551 / Oshkosh</strain>
    </source>
</reference>
<protein>
    <recommendedName>
        <fullName evidence="1">Transcription termination factor Rho</fullName>
        <ecNumber evidence="1">3.6.4.-</ecNumber>
    </recommendedName>
    <alternativeName>
        <fullName evidence="1">ATP-dependent helicase Rho</fullName>
    </alternativeName>
</protein>
<sequence length="602" mass="65133">MTDTDLITAGESTDGKPSDAAATDPPDLNADEPAGSLATMVLPELRALANRAGVKGTSGMRKNELIAAIEEIRRQANGAPAVDRSAQEHDKGDRPPSSEAPATQGEQTPTEQIDSQSQQVRPERRSATREAGPSGSGERAGTAADDTDNRQGGQQDAKTEERGTDAGGDQGGDQQASGGQQARGDEDGEARQGRRGRRFRDRRRRGERSGDGAEAELREDDVVQPVAGILDVLDNYAFVRTSGYLPGPHDVYVSMNMVRKNGMRRGDAVTGAVRVPKEGEQPNQRQKFNPLVRLDSINGGSVEDAKKRPEFGKLTPLYPNQRLRLETSTERLTTRVIDLIMPIGKGQRALIVSPPKAGKTTILQDIANAITRNNPECHLMVVLVDERPEEVTDMQRSVKGEVIASTFDRPPSDHTSVAELAIERAKRLVEQGKDVVVLLDSITRLGRAYNNASPASGRILSGGVDSTALYPPKRFLGAARNIEEGGSLTIIATAMVETGSTGDTVIFEEFKGTGNAELKLDRKIAERRVFPAVDVNPSGTRKDELLLSPDEFAIVHKLRRVLSGLDSHQAIDLLMSQLRKTKNNYEFLVQVSKTTPGSMDSD</sequence>
<keyword id="KW-0067">ATP-binding</keyword>
<keyword id="KW-0347">Helicase</keyword>
<keyword id="KW-0378">Hydrolase</keyword>
<keyword id="KW-0547">Nucleotide-binding</keyword>
<keyword id="KW-1185">Reference proteome</keyword>
<keyword id="KW-0694">RNA-binding</keyword>
<keyword id="KW-0804">Transcription</keyword>
<keyword id="KW-0805">Transcription regulation</keyword>
<keyword id="KW-0806">Transcription termination</keyword>